<dbReference type="EMBL" id="Z46259">
    <property type="protein sequence ID" value="CAA86376.1"/>
    <property type="molecule type" value="Genomic_DNA"/>
</dbReference>
<dbReference type="EMBL" id="Z71597">
    <property type="protein sequence ID" value="CAA96252.1"/>
    <property type="molecule type" value="Genomic_DNA"/>
</dbReference>
<dbReference type="EMBL" id="BK006947">
    <property type="protein sequence ID" value="DAA10241.1"/>
    <property type="molecule type" value="Genomic_DNA"/>
</dbReference>
<dbReference type="PIR" id="S51293">
    <property type="entry name" value="S51293"/>
</dbReference>
<dbReference type="RefSeq" id="NP_014078.1">
    <property type="nucleotide sequence ID" value="NM_001183159.1"/>
</dbReference>
<dbReference type="SMR" id="P42839"/>
<dbReference type="BioGRID" id="35519">
    <property type="interactions" value="85"/>
</dbReference>
<dbReference type="DIP" id="DIP-4268N"/>
<dbReference type="FunCoup" id="P42839">
    <property type="interactions" value="49"/>
</dbReference>
<dbReference type="IntAct" id="P42839">
    <property type="interactions" value="25"/>
</dbReference>
<dbReference type="STRING" id="4932.YNL321W"/>
<dbReference type="TCDB" id="2.A.19.7.1">
    <property type="family name" value="the ca(2+):cation antiporter (caca) family"/>
</dbReference>
<dbReference type="GlyCosmos" id="P42839">
    <property type="glycosylation" value="1 site, No reported glycans"/>
</dbReference>
<dbReference type="GlyGen" id="P42839">
    <property type="glycosylation" value="3 sites, 1 O-linked glycan (2 sites)"/>
</dbReference>
<dbReference type="iPTMnet" id="P42839"/>
<dbReference type="PaxDb" id="4932-YNL321W"/>
<dbReference type="PeptideAtlas" id="P42839"/>
<dbReference type="EnsemblFungi" id="YNL321W_mRNA">
    <property type="protein sequence ID" value="YNL321W"/>
    <property type="gene ID" value="YNL321W"/>
</dbReference>
<dbReference type="GeneID" id="855395"/>
<dbReference type="KEGG" id="sce:YNL321W"/>
<dbReference type="AGR" id="SGD:S000005265"/>
<dbReference type="SGD" id="S000005265">
    <property type="gene designation" value="VNX1"/>
</dbReference>
<dbReference type="VEuPathDB" id="FungiDB:YNL321W"/>
<dbReference type="eggNOG" id="KOG1397">
    <property type="taxonomic scope" value="Eukaryota"/>
</dbReference>
<dbReference type="GeneTree" id="ENSGT00390000016897"/>
<dbReference type="HOGENOM" id="CLU_001583_0_0_1"/>
<dbReference type="InParanoid" id="P42839"/>
<dbReference type="OMA" id="PQWDMIT"/>
<dbReference type="OrthoDB" id="16982at2759"/>
<dbReference type="BioCyc" id="YEAST:G3O-33306-MONOMER"/>
<dbReference type="SABIO-RK" id="P42839"/>
<dbReference type="BioGRID-ORCS" id="855395">
    <property type="hits" value="0 hits in 10 CRISPR screens"/>
</dbReference>
<dbReference type="PRO" id="PR:P42839"/>
<dbReference type="Proteomes" id="UP000002311">
    <property type="component" value="Chromosome XIV"/>
</dbReference>
<dbReference type="RNAct" id="P42839">
    <property type="molecule type" value="protein"/>
</dbReference>
<dbReference type="GO" id="GO:0012505">
    <property type="term" value="C:endomembrane system"/>
    <property type="evidence" value="ECO:0000318"/>
    <property type="project" value="GO_Central"/>
</dbReference>
<dbReference type="GO" id="GO:0005789">
    <property type="term" value="C:endoplasmic reticulum membrane"/>
    <property type="evidence" value="ECO:0000314"/>
    <property type="project" value="SGD"/>
</dbReference>
<dbReference type="GO" id="GO:0000324">
    <property type="term" value="C:fungal-type vacuole"/>
    <property type="evidence" value="ECO:0000314"/>
    <property type="project" value="SGD"/>
</dbReference>
<dbReference type="GO" id="GO:0000329">
    <property type="term" value="C:fungal-type vacuole membrane"/>
    <property type="evidence" value="ECO:0000314"/>
    <property type="project" value="SGD"/>
</dbReference>
<dbReference type="GO" id="GO:1990816">
    <property type="term" value="C:vacuole-mitochondrion membrane contact site"/>
    <property type="evidence" value="ECO:0000314"/>
    <property type="project" value="SGD"/>
</dbReference>
<dbReference type="GO" id="GO:0015369">
    <property type="term" value="F:calcium:proton antiporter activity"/>
    <property type="evidence" value="ECO:0000315"/>
    <property type="project" value="SGD"/>
</dbReference>
<dbReference type="GO" id="GO:0015386">
    <property type="term" value="F:potassium:proton antiporter activity"/>
    <property type="evidence" value="ECO:0000315"/>
    <property type="project" value="SGD"/>
</dbReference>
<dbReference type="GO" id="GO:0015385">
    <property type="term" value="F:sodium:proton antiporter activity"/>
    <property type="evidence" value="ECO:0000315"/>
    <property type="project" value="SGD"/>
</dbReference>
<dbReference type="GO" id="GO:0070588">
    <property type="term" value="P:calcium ion transmembrane transport"/>
    <property type="evidence" value="ECO:0000318"/>
    <property type="project" value="GO_Central"/>
</dbReference>
<dbReference type="GO" id="GO:0006874">
    <property type="term" value="P:intracellular calcium ion homeostasis"/>
    <property type="evidence" value="ECO:0000318"/>
    <property type="project" value="GO_Central"/>
</dbReference>
<dbReference type="GO" id="GO:0006813">
    <property type="term" value="P:potassium ion transport"/>
    <property type="evidence" value="ECO:0000315"/>
    <property type="project" value="SGD"/>
</dbReference>
<dbReference type="GO" id="GO:1902600">
    <property type="term" value="P:proton transmembrane transport"/>
    <property type="evidence" value="ECO:0000315"/>
    <property type="project" value="SGD"/>
</dbReference>
<dbReference type="GO" id="GO:0006814">
    <property type="term" value="P:sodium ion transport"/>
    <property type="evidence" value="ECO:0000315"/>
    <property type="project" value="SGD"/>
</dbReference>
<dbReference type="FunFam" id="1.20.1420.30:FF:000014">
    <property type="entry name" value="Cation/H+ exchanger protein 2"/>
    <property type="match status" value="1"/>
</dbReference>
<dbReference type="Gene3D" id="1.20.1420.30">
    <property type="entry name" value="NCX, central ion-binding region"/>
    <property type="match status" value="1"/>
</dbReference>
<dbReference type="InterPro" id="IPR004713">
    <property type="entry name" value="CaH_exchang"/>
</dbReference>
<dbReference type="InterPro" id="IPR004837">
    <property type="entry name" value="NaCa_Exmemb"/>
</dbReference>
<dbReference type="InterPro" id="IPR044880">
    <property type="entry name" value="NCX_ion-bd_dom_sf"/>
</dbReference>
<dbReference type="InterPro" id="IPR005185">
    <property type="entry name" value="YccF"/>
</dbReference>
<dbReference type="PANTHER" id="PTHR31503">
    <property type="entry name" value="VACUOLAR CALCIUM ION TRANSPORTER"/>
    <property type="match status" value="1"/>
</dbReference>
<dbReference type="PANTHER" id="PTHR31503:SF10">
    <property type="entry name" value="VNX1 PROTEIN"/>
    <property type="match status" value="1"/>
</dbReference>
<dbReference type="Pfam" id="PF01699">
    <property type="entry name" value="Na_Ca_ex"/>
    <property type="match status" value="2"/>
</dbReference>
<dbReference type="Pfam" id="PF03733">
    <property type="entry name" value="YccF"/>
    <property type="match status" value="1"/>
</dbReference>
<reference key="1">
    <citation type="journal article" date="1995" name="Yeast">
        <title>Sequencing analysis of a 24.7 kb fragment of yeast chromosome XIV identifies six known genes, a new member of the hexose transporter family and ten new open reading frames.</title>
        <authorList>
            <person name="Maftahi M."/>
            <person name="Nicaud J.-M."/>
            <person name="Levesque H."/>
            <person name="Gaillardin C."/>
        </authorList>
    </citation>
    <scope>NUCLEOTIDE SEQUENCE [GENOMIC DNA]</scope>
    <source>
        <strain>S288c / FY1676</strain>
    </source>
</reference>
<reference key="2">
    <citation type="journal article" date="1997" name="Nature">
        <title>The nucleotide sequence of Saccharomyces cerevisiae chromosome XIV and its evolutionary implications.</title>
        <authorList>
            <person name="Philippsen P."/>
            <person name="Kleine K."/>
            <person name="Poehlmann R."/>
            <person name="Duesterhoeft A."/>
            <person name="Hamberg K."/>
            <person name="Hegemann J.H."/>
            <person name="Obermaier B."/>
            <person name="Urrestarazu L.A."/>
            <person name="Aert R."/>
            <person name="Albermann K."/>
            <person name="Altmann R."/>
            <person name="Andre B."/>
            <person name="Baladron V."/>
            <person name="Ballesta J.P.G."/>
            <person name="Becam A.-M."/>
            <person name="Beinhauer J.D."/>
            <person name="Boskovic J."/>
            <person name="Buitrago M.J."/>
            <person name="Bussereau F."/>
            <person name="Coster F."/>
            <person name="Crouzet M."/>
            <person name="D'Angelo M."/>
            <person name="Dal Pero F."/>
            <person name="De Antoni A."/>
            <person name="del Rey F."/>
            <person name="Doignon F."/>
            <person name="Domdey H."/>
            <person name="Dubois E."/>
            <person name="Fiedler T.A."/>
            <person name="Fleig U."/>
            <person name="Floeth M."/>
            <person name="Fritz C."/>
            <person name="Gaillardin C."/>
            <person name="Garcia-Cantalejo J.M."/>
            <person name="Glansdorff N."/>
            <person name="Goffeau A."/>
            <person name="Gueldener U."/>
            <person name="Herbert C.J."/>
            <person name="Heumann K."/>
            <person name="Heuss-Neitzel D."/>
            <person name="Hilbert H."/>
            <person name="Hinni K."/>
            <person name="Iraqui Houssaini I."/>
            <person name="Jacquet M."/>
            <person name="Jimenez A."/>
            <person name="Jonniaux J.-L."/>
            <person name="Karpfinger-Hartl L."/>
            <person name="Lanfranchi G."/>
            <person name="Lepingle A."/>
            <person name="Levesque H."/>
            <person name="Lyck R."/>
            <person name="Maftahi M."/>
            <person name="Mallet L."/>
            <person name="Maurer C.T.C."/>
            <person name="Messenguy F."/>
            <person name="Mewes H.-W."/>
            <person name="Moestl D."/>
            <person name="Nasr F."/>
            <person name="Nicaud J.-M."/>
            <person name="Niedenthal R.K."/>
            <person name="Pandolfo D."/>
            <person name="Pierard A."/>
            <person name="Piravandi E."/>
            <person name="Planta R.J."/>
            <person name="Pohl T.M."/>
            <person name="Purnelle B."/>
            <person name="Rebischung C."/>
            <person name="Remacha M.A."/>
            <person name="Revuelta J.L."/>
            <person name="Rinke M."/>
            <person name="Saiz J.E."/>
            <person name="Sartorello F."/>
            <person name="Scherens B."/>
            <person name="Sen-Gupta M."/>
            <person name="Soler-Mira A."/>
            <person name="Urbanus J.H.M."/>
            <person name="Valle G."/>
            <person name="Van Dyck L."/>
            <person name="Verhasselt P."/>
            <person name="Vierendeels F."/>
            <person name="Vissers S."/>
            <person name="Voet M."/>
            <person name="Volckaert G."/>
            <person name="Wach A."/>
            <person name="Wambutt R."/>
            <person name="Wedler H."/>
            <person name="Zollner A."/>
            <person name="Hani J."/>
        </authorList>
    </citation>
    <scope>NUCLEOTIDE SEQUENCE [LARGE SCALE GENOMIC DNA]</scope>
    <source>
        <strain>ATCC 204508 / S288c</strain>
    </source>
</reference>
<reference key="3">
    <citation type="journal article" date="2014" name="G3 (Bethesda)">
        <title>The reference genome sequence of Saccharomyces cerevisiae: Then and now.</title>
        <authorList>
            <person name="Engel S.R."/>
            <person name="Dietrich F.S."/>
            <person name="Fisk D.G."/>
            <person name="Binkley G."/>
            <person name="Balakrishnan R."/>
            <person name="Costanzo M.C."/>
            <person name="Dwight S.S."/>
            <person name="Hitz B.C."/>
            <person name="Karra K."/>
            <person name="Nash R.S."/>
            <person name="Weng S."/>
            <person name="Wong E.D."/>
            <person name="Lloyd P."/>
            <person name="Skrzypek M.S."/>
            <person name="Miyasato S.R."/>
            <person name="Simison M."/>
            <person name="Cherry J.M."/>
        </authorList>
    </citation>
    <scope>GENOME REANNOTATION</scope>
    <source>
        <strain>ATCC 204508 / S288c</strain>
    </source>
</reference>
<reference key="4">
    <citation type="journal article" date="2003" name="Nature">
        <title>Global analysis of protein expression in yeast.</title>
        <authorList>
            <person name="Ghaemmaghami S."/>
            <person name="Huh W.-K."/>
            <person name="Bower K."/>
            <person name="Howson R.W."/>
            <person name="Belle A."/>
            <person name="Dephoure N."/>
            <person name="O'Shea E.K."/>
            <person name="Weissman J.S."/>
        </authorList>
    </citation>
    <scope>LEVEL OF PROTEIN EXPRESSION [LARGE SCALE ANALYSIS]</scope>
</reference>
<reference key="5">
    <citation type="journal article" date="2006" name="Proc. Natl. Acad. Sci. U.S.A.">
        <title>A global topology map of the Saccharomyces cerevisiae membrane proteome.</title>
        <authorList>
            <person name="Kim H."/>
            <person name="Melen K."/>
            <person name="Oesterberg M."/>
            <person name="von Heijne G."/>
        </authorList>
    </citation>
    <scope>TOPOLOGY [LARGE SCALE ANALYSIS]</scope>
    <source>
        <strain>ATCC 208353 / W303-1A</strain>
    </source>
</reference>
<reference key="6">
    <citation type="journal article" date="2007" name="J. Biol. Chem.">
        <title>Identification and characterization of Vnx1p, a novel type of vacuolar monovalent cation/H+ antiporter of Saccharomyces cerevisiae.</title>
        <authorList>
            <person name="Cagnac O."/>
            <person name="Leterrier M."/>
            <person name="Yeager M."/>
            <person name="Blumwald E."/>
        </authorList>
    </citation>
    <scope>FUNCTION</scope>
    <scope>BIOPHYSICOCHEMICAL PROPERTIES</scope>
    <scope>SUBCELLULAR LOCATION</scope>
</reference>
<reference key="7">
    <citation type="journal article" date="2007" name="J. Proteome Res.">
        <title>Large-scale phosphorylation analysis of alpha-factor-arrested Saccharomyces cerevisiae.</title>
        <authorList>
            <person name="Li X."/>
            <person name="Gerber S.A."/>
            <person name="Rudner A.D."/>
            <person name="Beausoleil S.A."/>
            <person name="Haas W."/>
            <person name="Villen J."/>
            <person name="Elias J.E."/>
            <person name="Gygi S.P."/>
        </authorList>
    </citation>
    <scope>PHOSPHORYLATION [LARGE SCALE ANALYSIS] AT THR-26 AND SER-110</scope>
    <scope>IDENTIFICATION BY MASS SPECTROMETRY [LARGE SCALE ANALYSIS]</scope>
    <source>
        <strain>ADR376</strain>
    </source>
</reference>
<reference key="8">
    <citation type="journal article" date="2008" name="Mol. Cell. Proteomics">
        <title>A multidimensional chromatography technology for in-depth phosphoproteome analysis.</title>
        <authorList>
            <person name="Albuquerque C.P."/>
            <person name="Smolka M.B."/>
            <person name="Payne S.H."/>
            <person name="Bafna V."/>
            <person name="Eng J."/>
            <person name="Zhou H."/>
        </authorList>
    </citation>
    <scope>IDENTIFICATION BY MASS SPECTROMETRY [LARGE SCALE ANALYSIS]</scope>
</reference>
<reference key="9">
    <citation type="journal article" date="2009" name="Science">
        <title>Global analysis of Cdk1 substrate phosphorylation sites provides insights into evolution.</title>
        <authorList>
            <person name="Holt L.J."/>
            <person name="Tuch B.B."/>
            <person name="Villen J."/>
            <person name="Johnson A.D."/>
            <person name="Gygi S.P."/>
            <person name="Morgan D.O."/>
        </authorList>
    </citation>
    <scope>PHOSPHORYLATION [LARGE SCALE ANALYSIS] AT THR-26; SER-32; THR-33; SER-110; THR-118 AND SER-121</scope>
    <scope>IDENTIFICATION BY MASS SPECTROMETRY [LARGE SCALE ANALYSIS]</scope>
</reference>
<reference key="10">
    <citation type="journal article" date="2012" name="Proc. Natl. Acad. Sci. U.S.A.">
        <title>N-terminal acetylome analyses and functional insights of the N-terminal acetyltransferase NatB.</title>
        <authorList>
            <person name="Van Damme P."/>
            <person name="Lasa M."/>
            <person name="Polevoda B."/>
            <person name="Gazquez C."/>
            <person name="Elosegui-Artola A."/>
            <person name="Kim D.S."/>
            <person name="De Juan-Pardo E."/>
            <person name="Demeyer K."/>
            <person name="Hole K."/>
            <person name="Larrea E."/>
            <person name="Timmerman E."/>
            <person name="Prieto J."/>
            <person name="Arnesen T."/>
            <person name="Sherman F."/>
            <person name="Gevaert K."/>
            <person name="Aldabe R."/>
        </authorList>
    </citation>
    <scope>IDENTIFICATION BY MASS SPECTROMETRY [LARGE SCALE ANALYSIS]</scope>
</reference>
<keyword id="KW-0325">Glycoprotein</keyword>
<keyword id="KW-0406">Ion transport</keyword>
<keyword id="KW-0472">Membrane</keyword>
<keyword id="KW-0597">Phosphoprotein</keyword>
<keyword id="KW-1185">Reference proteome</keyword>
<keyword id="KW-0915">Sodium</keyword>
<keyword id="KW-0739">Sodium transport</keyword>
<keyword id="KW-0812">Transmembrane</keyword>
<keyword id="KW-1133">Transmembrane helix</keyword>
<keyword id="KW-0813">Transport</keyword>
<keyword id="KW-0926">Vacuole</keyword>
<proteinExistence type="evidence at protein level"/>
<gene>
    <name type="primary">VNX1</name>
    <name type="ordered locus">YNL321W</name>
    <name type="ORF">N0339</name>
</gene>
<protein>
    <recommendedName>
        <fullName>Low affinity vacuolar monovalent cation/H(+) antiporter</fullName>
    </recommendedName>
    <alternativeName>
        <fullName>Vacuolar Na(+)/H(+) exchanger</fullName>
    </alternativeName>
</protein>
<name>VNX1_YEAST</name>
<accession>P42839</accession>
<accession>D6W0M5</accession>
<sequence>MAKNNHISASGNSTSGDHRLKEEVLTPTTSASTPHRIFSVDDDPKEIQNDIRYLEGLHEGLKFALHANKSKRSVSSQSPIVHSSNNTLHHHEHQQHLPPTLESLSSKSHSVPDLNTATPSSPKRMHSSIRELPHDDNDDEDANDDSRFIIHDSHGHDLLIDEINCQSPSHLENNDQASNASSTESFTLRERQDAINETHPFGIRIWKPALYKKHRSVQRTAAQDIHETQLKTITWEVTCSNVLWFILFGFPIAILFYSAAIVVFLLGGGGLVTNSAKEYSKCLYKLANYFLWPFGKMVYLLQDEQYLQEDKDEGISMQQFYNWVTSYSNRLVFHQSQAKFQQREDHPAPATESSSLMPPANTTATPLNSNHPSYNSIRHEIPHAAAQRRYFGRGKWSWGRVLFYTIFHLVLQPILAVLSLCLWLLVFTIPMSNVLWQIMYHCRRHPLALGFKYVENSSQSHENEITQQQLNKNILLCTFRAAGWHYYKYTVDGTNVIVVNLISIVFFTIFDFYVLKNFLHWKTWFTYESSIFILCLTSTIPLAFYIGQAVASISAQTSMGVGAVINAFFSTIVEIFLYCVALQQKKGLLVEGSMIGSILGAVLLLPGLSMCGGALNRKTQRYNPASAGVSSALLIFSMIVMFVPTVLYEIYGGYSVNCADGANDRDCTFSHPPLKFNRLFTHVIQPMSISCAIVLFCAYIIGLWFTLRTHAKMIWQLPIADPTSTAPEQQEQNSHDAPNWSRSKSTCILLMSTLLYAIIAEILVSCVDAVLEDIPSLNPKFLGLTIFALIPNTTEFLNAISFAIHGNVALSMEIGSAYALQVCLLQIPSLVIYSIFYTWNVKKSMINIRTQMFPLVFPRWDIFGAMTSVFMFTYLYAEGKSNYFKGSMLILLYIIIVVGFYFQGALSE</sequence>
<organism>
    <name type="scientific">Saccharomyces cerevisiae (strain ATCC 204508 / S288c)</name>
    <name type="common">Baker's yeast</name>
    <dbReference type="NCBI Taxonomy" id="559292"/>
    <lineage>
        <taxon>Eukaryota</taxon>
        <taxon>Fungi</taxon>
        <taxon>Dikarya</taxon>
        <taxon>Ascomycota</taxon>
        <taxon>Saccharomycotina</taxon>
        <taxon>Saccharomycetes</taxon>
        <taxon>Saccharomycetales</taxon>
        <taxon>Saccharomycetaceae</taxon>
        <taxon>Saccharomyces</taxon>
    </lineage>
</organism>
<comment type="function">
    <text evidence="4">Has a role in promoting intracellular monovalent cation sequestration via the exchange of monovalent cations and especially Na(+) for hydrogen ions across the vacuolar membrane.</text>
</comment>
<comment type="biophysicochemical properties">
    <kinetics>
        <KM evidence="4">22.4 mM for Na(+) transport</KM>
        <KM evidence="4">82.2 mM for K(+) transport</KM>
    </kinetics>
</comment>
<comment type="subcellular location">
    <subcellularLocation>
        <location evidence="4">Vacuole membrane</location>
        <topology evidence="4">Multi-pass membrane protein</topology>
    </subcellularLocation>
</comment>
<comment type="miscellaneous">
    <text evidence="3">Present with 259 molecules/cell in log phase SD medium.</text>
</comment>
<comment type="similarity">
    <text evidence="5">Belongs to the Ca(2+):cation antiporter (CaCA) (TC 2.A.19) family.</text>
</comment>
<feature type="chain" id="PRO_0000209505" description="Low affinity vacuolar monovalent cation/H(+) antiporter">
    <location>
        <begin position="1"/>
        <end position="908"/>
    </location>
</feature>
<feature type="topological domain" description="Cytoplasmic" evidence="1">
    <location>
        <begin position="1"/>
        <end position="244"/>
    </location>
</feature>
<feature type="transmembrane region" description="Helical" evidence="1">
    <location>
        <begin position="245"/>
        <end position="265"/>
    </location>
</feature>
<feature type="topological domain" description="Vacuolar" evidence="1">
    <location>
        <begin position="266"/>
        <end position="408"/>
    </location>
</feature>
<feature type="transmembrane region" description="Helical" evidence="1">
    <location>
        <begin position="409"/>
        <end position="429"/>
    </location>
</feature>
<feature type="topological domain" description="Cytoplasmic" evidence="1">
    <location>
        <begin position="430"/>
        <end position="494"/>
    </location>
</feature>
<feature type="transmembrane region" description="Helical" evidence="1">
    <location>
        <begin position="495"/>
        <end position="515"/>
    </location>
</feature>
<feature type="topological domain" description="Vacuolar" evidence="1">
    <location>
        <begin position="516"/>
        <end position="530"/>
    </location>
</feature>
<feature type="transmembrane region" description="Helical" evidence="1">
    <location>
        <begin position="531"/>
        <end position="551"/>
    </location>
</feature>
<feature type="topological domain" description="Cytoplasmic" evidence="1">
    <location>
        <begin position="552"/>
        <end position="560"/>
    </location>
</feature>
<feature type="transmembrane region" description="Helical" evidence="1">
    <location>
        <begin position="561"/>
        <end position="581"/>
    </location>
</feature>
<feature type="topological domain" description="Vacuolar" evidence="1">
    <location>
        <begin position="582"/>
        <end position="587"/>
    </location>
</feature>
<feature type="transmembrane region" description="Helical" evidence="1">
    <location>
        <begin position="588"/>
        <end position="608"/>
    </location>
</feature>
<feature type="topological domain" description="Cytoplasmic" evidence="1">
    <location>
        <begin position="609"/>
        <end position="626"/>
    </location>
</feature>
<feature type="transmembrane region" description="Helical" evidence="1">
    <location>
        <begin position="627"/>
        <end position="647"/>
    </location>
</feature>
<feature type="topological domain" description="Vacuolar" evidence="1">
    <location>
        <begin position="648"/>
        <end position="686"/>
    </location>
</feature>
<feature type="transmembrane region" description="Helical" evidence="1">
    <location>
        <begin position="687"/>
        <end position="707"/>
    </location>
</feature>
<feature type="topological domain" description="Cytoplasmic" evidence="1">
    <location>
        <begin position="708"/>
        <end position="746"/>
    </location>
</feature>
<feature type="transmembrane region" description="Helical" evidence="1">
    <location>
        <begin position="747"/>
        <end position="767"/>
    </location>
</feature>
<feature type="topological domain" description="Vacuolar" evidence="1">
    <location>
        <begin position="768"/>
        <end position="783"/>
    </location>
</feature>
<feature type="transmembrane region" description="Helical" evidence="1">
    <location>
        <begin position="784"/>
        <end position="804"/>
    </location>
</feature>
<feature type="topological domain" description="Cytoplasmic" evidence="1">
    <location>
        <begin position="805"/>
        <end position="816"/>
    </location>
</feature>
<feature type="transmembrane region" description="Helical" evidence="1">
    <location>
        <begin position="817"/>
        <end position="837"/>
    </location>
</feature>
<feature type="topological domain" description="Vacuolar" evidence="1">
    <location>
        <begin position="838"/>
        <end position="851"/>
    </location>
</feature>
<feature type="transmembrane region" description="Helical" evidence="1">
    <location>
        <begin position="852"/>
        <end position="872"/>
    </location>
</feature>
<feature type="topological domain" description="Cytoplasmic" evidence="1">
    <location>
        <begin position="873"/>
        <end position="885"/>
    </location>
</feature>
<feature type="transmembrane region" description="Helical" evidence="1">
    <location>
        <begin position="886"/>
        <end position="906"/>
    </location>
</feature>
<feature type="topological domain" description="Vacuolar" evidence="1">
    <location>
        <begin position="907"/>
        <end position="908"/>
    </location>
</feature>
<feature type="region of interest" description="Disordered" evidence="2">
    <location>
        <begin position="1"/>
        <end position="20"/>
    </location>
</feature>
<feature type="region of interest" description="Disordered" evidence="2">
    <location>
        <begin position="68"/>
        <end position="147"/>
    </location>
</feature>
<feature type="compositionally biased region" description="Polar residues" evidence="2">
    <location>
        <begin position="1"/>
        <end position="15"/>
    </location>
</feature>
<feature type="compositionally biased region" description="Low complexity" evidence="2">
    <location>
        <begin position="73"/>
        <end position="87"/>
    </location>
</feature>
<feature type="compositionally biased region" description="Polar residues" evidence="2">
    <location>
        <begin position="102"/>
        <end position="121"/>
    </location>
</feature>
<feature type="modified residue" description="Phosphothreonine" evidence="6 7">
    <location>
        <position position="26"/>
    </location>
</feature>
<feature type="modified residue" description="Phosphoserine" evidence="7">
    <location>
        <position position="32"/>
    </location>
</feature>
<feature type="modified residue" description="Phosphothreonine" evidence="7">
    <location>
        <position position="33"/>
    </location>
</feature>
<feature type="modified residue" description="Phosphoserine" evidence="6 7">
    <location>
        <position position="110"/>
    </location>
</feature>
<feature type="modified residue" description="Phosphothreonine" evidence="7">
    <location>
        <position position="118"/>
    </location>
</feature>
<feature type="modified residue" description="Phosphoserine" evidence="7">
    <location>
        <position position="121"/>
    </location>
</feature>
<feature type="glycosylation site" description="N-linked (GlcNAc...) asparagine" evidence="1">
    <location>
        <position position="361"/>
    </location>
</feature>
<evidence type="ECO:0000255" key="1"/>
<evidence type="ECO:0000256" key="2">
    <source>
        <dbReference type="SAM" id="MobiDB-lite"/>
    </source>
</evidence>
<evidence type="ECO:0000269" key="3">
    <source>
    </source>
</evidence>
<evidence type="ECO:0000269" key="4">
    <source>
    </source>
</evidence>
<evidence type="ECO:0000305" key="5"/>
<evidence type="ECO:0007744" key="6">
    <source>
    </source>
</evidence>
<evidence type="ECO:0007744" key="7">
    <source>
    </source>
</evidence>